<gene>
    <name evidence="10" type="primary">PSA2</name>
    <name evidence="9" type="synonym">EDA3</name>
    <name evidence="12" type="ordered locus">At2g34860</name>
    <name evidence="13" type="ORF">F19I3.9</name>
</gene>
<reference key="1">
    <citation type="journal article" date="1999" name="Nature">
        <title>Sequence and analysis of chromosome 2 of the plant Arabidopsis thaliana.</title>
        <authorList>
            <person name="Lin X."/>
            <person name="Kaul S."/>
            <person name="Rounsley S.D."/>
            <person name="Shea T.P."/>
            <person name="Benito M.-I."/>
            <person name="Town C.D."/>
            <person name="Fujii C.Y."/>
            <person name="Mason T.M."/>
            <person name="Bowman C.L."/>
            <person name="Barnstead M.E."/>
            <person name="Feldblyum T.V."/>
            <person name="Buell C.R."/>
            <person name="Ketchum K.A."/>
            <person name="Lee J.J."/>
            <person name="Ronning C.M."/>
            <person name="Koo H.L."/>
            <person name="Moffat K.S."/>
            <person name="Cronin L.A."/>
            <person name="Shen M."/>
            <person name="Pai G."/>
            <person name="Van Aken S."/>
            <person name="Umayam L."/>
            <person name="Tallon L.J."/>
            <person name="Gill J.E."/>
            <person name="Adams M.D."/>
            <person name="Carrera A.J."/>
            <person name="Creasy T.H."/>
            <person name="Goodman H.M."/>
            <person name="Somerville C.R."/>
            <person name="Copenhaver G.P."/>
            <person name="Preuss D."/>
            <person name="Nierman W.C."/>
            <person name="White O."/>
            <person name="Eisen J.A."/>
            <person name="Salzberg S.L."/>
            <person name="Fraser C.M."/>
            <person name="Venter J.C."/>
        </authorList>
    </citation>
    <scope>NUCLEOTIDE SEQUENCE [LARGE SCALE GENOMIC DNA]</scope>
    <source>
        <strain>cv. Columbia</strain>
    </source>
</reference>
<reference key="2">
    <citation type="journal article" date="2017" name="Plant J.">
        <title>Araport11: a complete reannotation of the Arabidopsis thaliana reference genome.</title>
        <authorList>
            <person name="Cheng C.Y."/>
            <person name="Krishnakumar V."/>
            <person name="Chan A.P."/>
            <person name="Thibaud-Nissen F."/>
            <person name="Schobel S."/>
            <person name="Town C.D."/>
        </authorList>
    </citation>
    <scope>GENOME REANNOTATION</scope>
    <source>
        <strain>cv. Columbia</strain>
    </source>
</reference>
<reference key="3">
    <citation type="journal article" date="2003" name="Science">
        <title>Empirical analysis of transcriptional activity in the Arabidopsis genome.</title>
        <authorList>
            <person name="Yamada K."/>
            <person name="Lim J."/>
            <person name="Dale J.M."/>
            <person name="Chen H."/>
            <person name="Shinn P."/>
            <person name="Palm C.J."/>
            <person name="Southwick A.M."/>
            <person name="Wu H.C."/>
            <person name="Kim C.J."/>
            <person name="Nguyen M."/>
            <person name="Pham P.K."/>
            <person name="Cheuk R.F."/>
            <person name="Karlin-Newmann G."/>
            <person name="Liu S.X."/>
            <person name="Lam B."/>
            <person name="Sakano H."/>
            <person name="Wu T."/>
            <person name="Yu G."/>
            <person name="Miranda M."/>
            <person name="Quach H.L."/>
            <person name="Tripp M."/>
            <person name="Chang C.H."/>
            <person name="Lee J.M."/>
            <person name="Toriumi M.J."/>
            <person name="Chan M.M."/>
            <person name="Tang C.C."/>
            <person name="Onodera C.S."/>
            <person name="Deng J.M."/>
            <person name="Akiyama K."/>
            <person name="Ansari Y."/>
            <person name="Arakawa T."/>
            <person name="Banh J."/>
            <person name="Banno F."/>
            <person name="Bowser L."/>
            <person name="Brooks S.Y."/>
            <person name="Carninci P."/>
            <person name="Chao Q."/>
            <person name="Choy N."/>
            <person name="Enju A."/>
            <person name="Goldsmith A.D."/>
            <person name="Gurjal M."/>
            <person name="Hansen N.F."/>
            <person name="Hayashizaki Y."/>
            <person name="Johnson-Hopson C."/>
            <person name="Hsuan V.W."/>
            <person name="Iida K."/>
            <person name="Karnes M."/>
            <person name="Khan S."/>
            <person name="Koesema E."/>
            <person name="Ishida J."/>
            <person name="Jiang P.X."/>
            <person name="Jones T."/>
            <person name="Kawai J."/>
            <person name="Kamiya A."/>
            <person name="Meyers C."/>
            <person name="Nakajima M."/>
            <person name="Narusaka M."/>
            <person name="Seki M."/>
            <person name="Sakurai T."/>
            <person name="Satou M."/>
            <person name="Tamse R."/>
            <person name="Vaysberg M."/>
            <person name="Wallender E.K."/>
            <person name="Wong C."/>
            <person name="Yamamura Y."/>
            <person name="Yuan S."/>
            <person name="Shinozaki K."/>
            <person name="Davis R.W."/>
            <person name="Theologis A."/>
            <person name="Ecker J.R."/>
        </authorList>
    </citation>
    <scope>NUCLEOTIDE SEQUENCE [LARGE SCALE MRNA]</scope>
    <source>
        <strain>cv. Columbia</strain>
    </source>
</reference>
<reference key="4">
    <citation type="journal article" date="2005" name="Development">
        <title>Genetic and molecular identification of genes required for female gametophyte development and function in Arabidopsis.</title>
        <authorList>
            <person name="Pagnussat G.C."/>
            <person name="Yu H.-J."/>
            <person name="Ngo Q.A."/>
            <person name="Rajani S."/>
            <person name="Mayalagu S."/>
            <person name="Johnson C.S."/>
            <person name="Capron A."/>
            <person name="Xie L.-F."/>
            <person name="Ye D."/>
            <person name="Sundaresan V."/>
        </authorList>
    </citation>
    <scope>FUNCTION</scope>
    <scope>DISRUPTION PHENOTYPE</scope>
</reference>
<reference key="5">
    <citation type="journal article" date="2014" name="Protein Pept. Lett.">
        <title>Identification of potential targets for thylakoid oxidoreductase AtVKOR/LTO1 in chloroplasts.</title>
        <authorList>
            <person name="Lu Y."/>
            <person name="Du J.J."/>
            <person name="Yu Z.B."/>
            <person name="Peng J.J."/>
            <person name="Xu J.N."/>
            <person name="Wang X.Y."/>
        </authorList>
    </citation>
    <scope>INTERACTION WITH LTO1</scope>
</reference>
<reference key="6">
    <citation type="journal article" date="2014" name="J. Biol. Chem.">
        <title>A thylakoid membrane protein harboring a DnaJ-type zinc finger domain is required for photosystem I accumulation in plants.</title>
        <authorList>
            <person name="Fristedt R."/>
            <person name="Williams-Carrier R."/>
            <person name="Merchant S.S."/>
            <person name="Barkan A."/>
        </authorList>
    </citation>
    <scope>FUNCTION</scope>
    <scope>DISRUPTION PHENOTYPE</scope>
</reference>
<reference key="7">
    <citation type="journal article" date="2016" name="Front. Plant Sci.">
        <title>The DnaJ-like zinc finger domain protein PSA2 affects light acclimation and chloroplast development in Arabidopsis thaliana.</title>
        <authorList>
            <person name="Wang Y.W."/>
            <person name="Chen S.M."/>
            <person name="Wang W.J."/>
            <person name="Huang X.Q."/>
            <person name="Zhou C.F."/>
            <person name="Zhuang Z."/>
            <person name="Lu S."/>
        </authorList>
    </citation>
    <scope>FUNCTION</scope>
    <scope>SUBCELLULAR LOCATION</scope>
    <scope>TISSUE SPECIFICITY</scope>
    <scope>DISRUPTION PHENOTYPE</scope>
</reference>
<sequence length="186" mass="19943">MAASSSHLFALPSPASPFLSAPNRNRVRVLAKSCPENQSFDSNDSDSSSETTHKAQGDQKSVSRRQWMTACVCASAALISNSYTFVSVQSAAALDKKPGGSCRNCQGSGAVLCDMCGGTGKWKALNRKRAKDVYEFTECPNCYGRGKLVCPVCLGTGLPNNKGLLRRPGARELLEKMYNGRLLPDS</sequence>
<comment type="function">
    <text evidence="5 6 8">Involved in female gametophyte development. Required for embryo sac development (PubMed:15634699). Nuclear genome-encoded factor required for the accumulation of photosystem I (PSI) during plant development (PubMed:25228689). Required for light acclimation and chloroplast development (PubMed:27047527).</text>
</comment>
<comment type="cofactor">
    <cofactor evidence="1">
        <name>Zn(2+)</name>
        <dbReference type="ChEBI" id="CHEBI:29105"/>
    </cofactor>
    <text evidence="1">Binds 2 Zn(2+) ions per monomer.</text>
</comment>
<comment type="subunit">
    <text evidence="7">Interacts in vitro with LTO1.</text>
</comment>
<comment type="subcellular location">
    <subcellularLocation>
        <location evidence="8">Plastid</location>
        <location evidence="8">Chloroplast thylakoid lumen</location>
    </subcellularLocation>
</comment>
<comment type="tissue specificity">
    <text evidence="8">Expressed in leaves and flowers. Expressed at low levels in siliques.</text>
</comment>
<comment type="disruption phenotype">
    <text evidence="5 6 8">Embryonic lethality due to female gametophyte development arrest at two-nuclear stage (PubMed:15634699). Seedling lethality when homozygous. Pale green leaf, variegated leaf and slow growing phenotype when grown on MS medium supplemented with sucrose (PubMed:25228689, PubMed:27047527).</text>
</comment>
<comment type="similarity">
    <text evidence="11">Belongs to the DnaJ family.</text>
</comment>
<evidence type="ECO:0000250" key="1">
    <source>
        <dbReference type="UniProtKB" id="Q6A662"/>
    </source>
</evidence>
<evidence type="ECO:0000255" key="2"/>
<evidence type="ECO:0000255" key="3">
    <source>
        <dbReference type="PROSITE-ProRule" id="PRU00546"/>
    </source>
</evidence>
<evidence type="ECO:0000256" key="4">
    <source>
        <dbReference type="SAM" id="MobiDB-lite"/>
    </source>
</evidence>
<evidence type="ECO:0000269" key="5">
    <source>
    </source>
</evidence>
<evidence type="ECO:0000269" key="6">
    <source>
    </source>
</evidence>
<evidence type="ECO:0000269" key="7">
    <source>
    </source>
</evidence>
<evidence type="ECO:0000269" key="8">
    <source>
    </source>
</evidence>
<evidence type="ECO:0000303" key="9">
    <source>
    </source>
</evidence>
<evidence type="ECO:0000303" key="10">
    <source>
    </source>
</evidence>
<evidence type="ECO:0000305" key="11"/>
<evidence type="ECO:0000312" key="12">
    <source>
        <dbReference type="Araport" id="AT2G34860"/>
    </source>
</evidence>
<evidence type="ECO:0000312" key="13">
    <source>
        <dbReference type="EMBL" id="AAC12826.1"/>
    </source>
</evidence>
<evidence type="ECO:0000312" key="14">
    <source>
        <dbReference type="Proteomes" id="UP000006548"/>
    </source>
</evidence>
<feature type="transit peptide" description="Chloroplast" evidence="2">
    <location>
        <begin position="1"/>
        <end position="75"/>
    </location>
</feature>
<feature type="chain" id="PRO_0000434572" description="Protein PHOTOSYSTEM I ASSEMBLY 2, chloroplastic">
    <location>
        <begin position="76"/>
        <end position="186"/>
    </location>
</feature>
<feature type="repeat" description="CXXCXGXG motif" evidence="1">
    <location>
        <begin position="102"/>
        <end position="109"/>
    </location>
</feature>
<feature type="repeat" description="CXXCXGXG motif" evidence="1">
    <location>
        <begin position="113"/>
        <end position="120"/>
    </location>
</feature>
<feature type="repeat" description="CXXCXGXG motif" evidence="1">
    <location>
        <begin position="139"/>
        <end position="146"/>
    </location>
</feature>
<feature type="repeat" description="CXXCXGXG motif" evidence="1">
    <location>
        <begin position="150"/>
        <end position="157"/>
    </location>
</feature>
<feature type="zinc finger region" description="CR-type" evidence="3">
    <location>
        <begin position="81"/>
        <end position="162"/>
    </location>
</feature>
<feature type="region of interest" description="Disordered" evidence="4">
    <location>
        <begin position="1"/>
        <end position="22"/>
    </location>
</feature>
<feature type="region of interest" description="Disordered" evidence="4">
    <location>
        <begin position="35"/>
        <end position="60"/>
    </location>
</feature>
<feature type="compositionally biased region" description="Low complexity" evidence="4">
    <location>
        <begin position="8"/>
        <end position="22"/>
    </location>
</feature>
<feature type="compositionally biased region" description="Low complexity" evidence="4">
    <location>
        <begin position="39"/>
        <end position="49"/>
    </location>
</feature>
<feature type="binding site" evidence="1">
    <location>
        <position position="102"/>
    </location>
    <ligand>
        <name>Zn(2+)</name>
        <dbReference type="ChEBI" id="CHEBI:29105"/>
        <label>1</label>
    </ligand>
</feature>
<feature type="binding site" evidence="1">
    <location>
        <position position="105"/>
    </location>
    <ligand>
        <name>Zn(2+)</name>
        <dbReference type="ChEBI" id="CHEBI:29105"/>
        <label>1</label>
    </ligand>
</feature>
<feature type="binding site" evidence="1">
    <location>
        <position position="113"/>
    </location>
    <ligand>
        <name>Zn(2+)</name>
        <dbReference type="ChEBI" id="CHEBI:29105"/>
        <label>2</label>
    </ligand>
</feature>
<feature type="binding site" evidence="1">
    <location>
        <position position="116"/>
    </location>
    <ligand>
        <name>Zn(2+)</name>
        <dbReference type="ChEBI" id="CHEBI:29105"/>
        <label>2</label>
    </ligand>
</feature>
<feature type="binding site" evidence="1">
    <location>
        <position position="139"/>
    </location>
    <ligand>
        <name>Zn(2+)</name>
        <dbReference type="ChEBI" id="CHEBI:29105"/>
        <label>2</label>
    </ligand>
</feature>
<feature type="binding site" evidence="1">
    <location>
        <position position="142"/>
    </location>
    <ligand>
        <name>Zn(2+)</name>
        <dbReference type="ChEBI" id="CHEBI:29105"/>
        <label>2</label>
    </ligand>
</feature>
<feature type="binding site" evidence="1">
    <location>
        <position position="150"/>
    </location>
    <ligand>
        <name>Zn(2+)</name>
        <dbReference type="ChEBI" id="CHEBI:29105"/>
        <label>1</label>
    </ligand>
</feature>
<feature type="binding site" evidence="1">
    <location>
        <position position="153"/>
    </location>
    <ligand>
        <name>Zn(2+)</name>
        <dbReference type="ChEBI" id="CHEBI:29105"/>
        <label>1</label>
    </ligand>
</feature>
<protein>
    <recommendedName>
        <fullName evidence="10">Protein PHOTOSYSTEM I ASSEMBLY 2, chloroplastic</fullName>
        <shortName evidence="10">AtPSA2</shortName>
    </recommendedName>
    <alternativeName>
        <fullName evidence="9">Protein EMBRYO SAC DEVELOPMENT ARREST 3</fullName>
    </alternativeName>
</protein>
<proteinExistence type="evidence at protein level"/>
<dbReference type="EMBL" id="AC004238">
    <property type="protein sequence ID" value="AAC12826.1"/>
    <property type="molecule type" value="Genomic_DNA"/>
</dbReference>
<dbReference type="EMBL" id="CP002685">
    <property type="protein sequence ID" value="AEC09031.1"/>
    <property type="molecule type" value="Genomic_DNA"/>
</dbReference>
<dbReference type="EMBL" id="CP002685">
    <property type="protein sequence ID" value="AEC09032.1"/>
    <property type="molecule type" value="Genomic_DNA"/>
</dbReference>
<dbReference type="EMBL" id="AY099664">
    <property type="protein sequence ID" value="AAM20515.1"/>
    <property type="molecule type" value="mRNA"/>
</dbReference>
<dbReference type="EMBL" id="AY128851">
    <property type="protein sequence ID" value="AAM91251.1"/>
    <property type="molecule type" value="mRNA"/>
</dbReference>
<dbReference type="PIR" id="T00468">
    <property type="entry name" value="T00468"/>
</dbReference>
<dbReference type="RefSeq" id="NP_001078004.1">
    <property type="nucleotide sequence ID" value="NM_001084535.1"/>
</dbReference>
<dbReference type="RefSeq" id="NP_181032.1">
    <property type="nucleotide sequence ID" value="NM_129039.4"/>
</dbReference>
<dbReference type="FunCoup" id="O64750">
    <property type="interactions" value="2017"/>
</dbReference>
<dbReference type="STRING" id="3702.O64750"/>
<dbReference type="PaxDb" id="3702-AT2G34860.2"/>
<dbReference type="ProteomicsDB" id="226342"/>
<dbReference type="EnsemblPlants" id="AT2G34860.1">
    <property type="protein sequence ID" value="AT2G34860.1"/>
    <property type="gene ID" value="AT2G34860"/>
</dbReference>
<dbReference type="EnsemblPlants" id="AT2G34860.2">
    <property type="protein sequence ID" value="AT2G34860.2"/>
    <property type="gene ID" value="AT2G34860"/>
</dbReference>
<dbReference type="GeneID" id="818051"/>
<dbReference type="Gramene" id="AT2G34860.1">
    <property type="protein sequence ID" value="AT2G34860.1"/>
    <property type="gene ID" value="AT2G34860"/>
</dbReference>
<dbReference type="Gramene" id="AT2G34860.2">
    <property type="protein sequence ID" value="AT2G34860.2"/>
    <property type="gene ID" value="AT2G34860"/>
</dbReference>
<dbReference type="KEGG" id="ath:AT2G34860"/>
<dbReference type="Araport" id="AT2G34860"/>
<dbReference type="TAIR" id="AT2G34860">
    <property type="gene designation" value="EDA3"/>
</dbReference>
<dbReference type="eggNOG" id="ENOG502RZYB">
    <property type="taxonomic scope" value="Eukaryota"/>
</dbReference>
<dbReference type="HOGENOM" id="CLU_072197_1_0_1"/>
<dbReference type="InParanoid" id="O64750"/>
<dbReference type="OMA" id="RQWMTAC"/>
<dbReference type="OrthoDB" id="513375at2759"/>
<dbReference type="PhylomeDB" id="O64750"/>
<dbReference type="PRO" id="PR:O64750"/>
<dbReference type="Proteomes" id="UP000006548">
    <property type="component" value="Chromosome 2"/>
</dbReference>
<dbReference type="ExpressionAtlas" id="O64750">
    <property type="expression patterns" value="baseline and differential"/>
</dbReference>
<dbReference type="GO" id="GO:0009507">
    <property type="term" value="C:chloroplast"/>
    <property type="evidence" value="ECO:0000314"/>
    <property type="project" value="TAIR"/>
</dbReference>
<dbReference type="GO" id="GO:0009534">
    <property type="term" value="C:chloroplast thylakoid"/>
    <property type="evidence" value="ECO:0000314"/>
    <property type="project" value="TAIR"/>
</dbReference>
<dbReference type="GO" id="GO:0009543">
    <property type="term" value="C:chloroplast thylakoid lumen"/>
    <property type="evidence" value="ECO:0007669"/>
    <property type="project" value="UniProtKB-SubCell"/>
</dbReference>
<dbReference type="GO" id="GO:0009535">
    <property type="term" value="C:chloroplast thylakoid membrane"/>
    <property type="evidence" value="ECO:0007005"/>
    <property type="project" value="TAIR"/>
</dbReference>
<dbReference type="GO" id="GO:0005783">
    <property type="term" value="C:endoplasmic reticulum"/>
    <property type="evidence" value="ECO:0007005"/>
    <property type="project" value="TAIR"/>
</dbReference>
<dbReference type="GO" id="GO:0005634">
    <property type="term" value="C:nucleus"/>
    <property type="evidence" value="ECO:0000314"/>
    <property type="project" value="TAIR"/>
</dbReference>
<dbReference type="GO" id="GO:0008270">
    <property type="term" value="F:zinc ion binding"/>
    <property type="evidence" value="ECO:0007669"/>
    <property type="project" value="UniProtKB-KW"/>
</dbReference>
<dbReference type="GO" id="GO:0009561">
    <property type="term" value="P:megagametogenesis"/>
    <property type="evidence" value="ECO:0000315"/>
    <property type="project" value="TAIR"/>
</dbReference>
<dbReference type="GO" id="GO:0048564">
    <property type="term" value="P:photosystem I assembly"/>
    <property type="evidence" value="ECO:0000315"/>
    <property type="project" value="UniProtKB"/>
</dbReference>
<dbReference type="GO" id="GO:0010027">
    <property type="term" value="P:thylakoid membrane organization"/>
    <property type="evidence" value="ECO:0000315"/>
    <property type="project" value="TAIR"/>
</dbReference>
<dbReference type="Gene3D" id="2.10.230.10">
    <property type="entry name" value="Heat shock protein DnaJ, cysteine-rich domain"/>
    <property type="match status" value="1"/>
</dbReference>
<dbReference type="InterPro" id="IPR036410">
    <property type="entry name" value="HSP_DnaJ_Cys-rich_dom_sf"/>
</dbReference>
<dbReference type="PANTHER" id="PTHR15852">
    <property type="entry name" value="PLASTID TRANSCRIPTIONALLY ACTIVE PROTEIN"/>
    <property type="match status" value="1"/>
</dbReference>
<dbReference type="PANTHER" id="PTHR15852:SF56">
    <property type="entry name" value="PROTEIN PHOTOSYSTEM I ASSEMBLY 2, CHLOROPLASTIC"/>
    <property type="match status" value="1"/>
</dbReference>
<dbReference type="SUPFAM" id="SSF57938">
    <property type="entry name" value="DnaJ/Hsp40 cysteine-rich domain"/>
    <property type="match status" value="1"/>
</dbReference>
<organism evidence="14">
    <name type="scientific">Arabidopsis thaliana</name>
    <name type="common">Mouse-ear cress</name>
    <dbReference type="NCBI Taxonomy" id="3702"/>
    <lineage>
        <taxon>Eukaryota</taxon>
        <taxon>Viridiplantae</taxon>
        <taxon>Streptophyta</taxon>
        <taxon>Embryophyta</taxon>
        <taxon>Tracheophyta</taxon>
        <taxon>Spermatophyta</taxon>
        <taxon>Magnoliopsida</taxon>
        <taxon>eudicotyledons</taxon>
        <taxon>Gunneridae</taxon>
        <taxon>Pentapetalae</taxon>
        <taxon>rosids</taxon>
        <taxon>malvids</taxon>
        <taxon>Brassicales</taxon>
        <taxon>Brassicaceae</taxon>
        <taxon>Camelineae</taxon>
        <taxon>Arabidopsis</taxon>
    </lineage>
</organism>
<accession>O64750</accession>
<name>PSA2_ARATH</name>
<keyword id="KW-0150">Chloroplast</keyword>
<keyword id="KW-0479">Metal-binding</keyword>
<keyword id="KW-0934">Plastid</keyword>
<keyword id="KW-1185">Reference proteome</keyword>
<keyword id="KW-0677">Repeat</keyword>
<keyword id="KW-0793">Thylakoid</keyword>
<keyword id="KW-0809">Transit peptide</keyword>
<keyword id="KW-0862">Zinc</keyword>
<keyword id="KW-0863">Zinc-finger</keyword>